<sequence>MDKKSARIRRATRARRKLKELGATRLVVHRTPRHIYAQVIAPNGSEVLVAASTVEKAIAEQLKYTGNKDAAAAVGKAVAERALEKGIKDVSFDRSGFQYHGRVQALADAAREAGLQF</sequence>
<keyword id="KW-0687">Ribonucleoprotein</keyword>
<keyword id="KW-0689">Ribosomal protein</keyword>
<keyword id="KW-0694">RNA-binding</keyword>
<keyword id="KW-0699">rRNA-binding</keyword>
<reference key="1">
    <citation type="journal article" date="2009" name="PLoS ONE">
        <title>Salmonella paratyphi C: genetic divergence from Salmonella choleraesuis and pathogenic convergence with Salmonella typhi.</title>
        <authorList>
            <person name="Liu W.-Q."/>
            <person name="Feng Y."/>
            <person name="Wang Y."/>
            <person name="Zou Q.-H."/>
            <person name="Chen F."/>
            <person name="Guo J.-T."/>
            <person name="Peng Y.-H."/>
            <person name="Jin Y."/>
            <person name="Li Y.-G."/>
            <person name="Hu S.-N."/>
            <person name="Johnston R.N."/>
            <person name="Liu G.-R."/>
            <person name="Liu S.-L."/>
        </authorList>
    </citation>
    <scope>NUCLEOTIDE SEQUENCE [LARGE SCALE GENOMIC DNA]</scope>
    <source>
        <strain>RKS4594</strain>
    </source>
</reference>
<protein>
    <recommendedName>
        <fullName evidence="1">Large ribosomal subunit protein uL18</fullName>
    </recommendedName>
    <alternativeName>
        <fullName evidence="2">50S ribosomal protein L18</fullName>
    </alternativeName>
</protein>
<proteinExistence type="inferred from homology"/>
<comment type="function">
    <text evidence="1">This is one of the proteins that bind and probably mediate the attachment of the 5S RNA into the large ribosomal subunit, where it forms part of the central protuberance.</text>
</comment>
<comment type="subunit">
    <text evidence="1">Part of the 50S ribosomal subunit; part of the 5S rRNA/L5/L18/L25 subcomplex. Contacts the 5S and 23S rRNAs.</text>
</comment>
<comment type="similarity">
    <text evidence="1">Belongs to the universal ribosomal protein uL18 family.</text>
</comment>
<accession>C0PZW7</accession>
<dbReference type="EMBL" id="CP000857">
    <property type="protein sequence ID" value="ACN47577.1"/>
    <property type="molecule type" value="Genomic_DNA"/>
</dbReference>
<dbReference type="RefSeq" id="WP_000358956.1">
    <property type="nucleotide sequence ID" value="NC_012125.1"/>
</dbReference>
<dbReference type="SMR" id="C0PZW7"/>
<dbReference type="GeneID" id="93035747"/>
<dbReference type="KEGG" id="sei:SPC_3493"/>
<dbReference type="HOGENOM" id="CLU_098841_0_1_6"/>
<dbReference type="Proteomes" id="UP000001599">
    <property type="component" value="Chromosome"/>
</dbReference>
<dbReference type="GO" id="GO:0022625">
    <property type="term" value="C:cytosolic large ribosomal subunit"/>
    <property type="evidence" value="ECO:0007669"/>
    <property type="project" value="TreeGrafter"/>
</dbReference>
<dbReference type="GO" id="GO:0008097">
    <property type="term" value="F:5S rRNA binding"/>
    <property type="evidence" value="ECO:0007669"/>
    <property type="project" value="TreeGrafter"/>
</dbReference>
<dbReference type="GO" id="GO:0003735">
    <property type="term" value="F:structural constituent of ribosome"/>
    <property type="evidence" value="ECO:0007669"/>
    <property type="project" value="InterPro"/>
</dbReference>
<dbReference type="GO" id="GO:0006412">
    <property type="term" value="P:translation"/>
    <property type="evidence" value="ECO:0007669"/>
    <property type="project" value="UniProtKB-UniRule"/>
</dbReference>
<dbReference type="CDD" id="cd00432">
    <property type="entry name" value="Ribosomal_L18_L5e"/>
    <property type="match status" value="1"/>
</dbReference>
<dbReference type="FunFam" id="3.30.420.100:FF:000001">
    <property type="entry name" value="50S ribosomal protein L18"/>
    <property type="match status" value="1"/>
</dbReference>
<dbReference type="Gene3D" id="3.30.420.100">
    <property type="match status" value="1"/>
</dbReference>
<dbReference type="HAMAP" id="MF_01337_B">
    <property type="entry name" value="Ribosomal_uL18_B"/>
    <property type="match status" value="1"/>
</dbReference>
<dbReference type="InterPro" id="IPR004389">
    <property type="entry name" value="Ribosomal_uL18_bac-type"/>
</dbReference>
<dbReference type="InterPro" id="IPR005484">
    <property type="entry name" value="Ribosomal_uL18_bac/euk"/>
</dbReference>
<dbReference type="NCBIfam" id="TIGR00060">
    <property type="entry name" value="L18_bact"/>
    <property type="match status" value="1"/>
</dbReference>
<dbReference type="PANTHER" id="PTHR12899">
    <property type="entry name" value="39S RIBOSOMAL PROTEIN L18, MITOCHONDRIAL"/>
    <property type="match status" value="1"/>
</dbReference>
<dbReference type="PANTHER" id="PTHR12899:SF3">
    <property type="entry name" value="LARGE RIBOSOMAL SUBUNIT PROTEIN UL18M"/>
    <property type="match status" value="1"/>
</dbReference>
<dbReference type="Pfam" id="PF00861">
    <property type="entry name" value="Ribosomal_L18p"/>
    <property type="match status" value="1"/>
</dbReference>
<dbReference type="SUPFAM" id="SSF53137">
    <property type="entry name" value="Translational machinery components"/>
    <property type="match status" value="1"/>
</dbReference>
<feature type="chain" id="PRO_1000166246" description="Large ribosomal subunit protein uL18">
    <location>
        <begin position="1"/>
        <end position="117"/>
    </location>
</feature>
<evidence type="ECO:0000255" key="1">
    <source>
        <dbReference type="HAMAP-Rule" id="MF_01337"/>
    </source>
</evidence>
<evidence type="ECO:0000305" key="2"/>
<name>RL18_SALPC</name>
<organism>
    <name type="scientific">Salmonella paratyphi C (strain RKS4594)</name>
    <dbReference type="NCBI Taxonomy" id="476213"/>
    <lineage>
        <taxon>Bacteria</taxon>
        <taxon>Pseudomonadati</taxon>
        <taxon>Pseudomonadota</taxon>
        <taxon>Gammaproteobacteria</taxon>
        <taxon>Enterobacterales</taxon>
        <taxon>Enterobacteriaceae</taxon>
        <taxon>Salmonella</taxon>
    </lineage>
</organism>
<gene>
    <name evidence="1" type="primary">rplR</name>
    <name type="ordered locus">SPC_3493</name>
</gene>